<reference key="1">
    <citation type="journal article" date="2003" name="DNA Res.">
        <title>Complete sequence and analysis of the plastid genome of the unicellular red alga Cyanidioschyzon merolae.</title>
        <authorList>
            <person name="Ohta N."/>
            <person name="Matsuzaki M."/>
            <person name="Misumi O."/>
            <person name="Miyagishima S.-Y."/>
            <person name="Nozaki H."/>
            <person name="Tanaka K."/>
            <person name="Shin-i T."/>
            <person name="Kohara Y."/>
            <person name="Kuroiwa T."/>
        </authorList>
    </citation>
    <scope>NUCLEOTIDE SEQUENCE [LARGE SCALE GENOMIC DNA]</scope>
    <source>
        <strain>NIES-3377 / 10D</strain>
    </source>
</reference>
<feature type="chain" id="PRO_0000129961" description="Small ribosomal subunit protein uS19c">
    <location>
        <begin position="1"/>
        <end position="94"/>
    </location>
</feature>
<accession>Q85FV9</accession>
<organism>
    <name type="scientific">Cyanidioschyzon merolae (strain NIES-3377 / 10D)</name>
    <name type="common">Unicellular red alga</name>
    <dbReference type="NCBI Taxonomy" id="280699"/>
    <lineage>
        <taxon>Eukaryota</taxon>
        <taxon>Rhodophyta</taxon>
        <taxon>Bangiophyceae</taxon>
        <taxon>Cyanidiales</taxon>
        <taxon>Cyanidiaceae</taxon>
        <taxon>Cyanidioschyzon</taxon>
    </lineage>
</organism>
<gene>
    <name evidence="1" type="primary">rps19</name>
</gene>
<proteinExistence type="inferred from homology"/>
<dbReference type="EMBL" id="AB002583">
    <property type="protein sequence ID" value="BAC76235.1"/>
    <property type="molecule type" value="Genomic_DNA"/>
</dbReference>
<dbReference type="RefSeq" id="NP_849073.1">
    <property type="nucleotide sequence ID" value="NC_004799.1"/>
</dbReference>
<dbReference type="SMR" id="Q85FV9"/>
<dbReference type="STRING" id="280699.Q85FV9"/>
<dbReference type="EnsemblPlants" id="CMV168CT">
    <property type="protein sequence ID" value="CMV168CT"/>
    <property type="gene ID" value="CMV168C"/>
</dbReference>
<dbReference type="GeneID" id="845007"/>
<dbReference type="Gramene" id="CMV168CT">
    <property type="protein sequence ID" value="CMV168CT"/>
    <property type="gene ID" value="CMV168C"/>
</dbReference>
<dbReference type="KEGG" id="cme:CymeCp141"/>
<dbReference type="eggNOG" id="KOG0899">
    <property type="taxonomic scope" value="Eukaryota"/>
</dbReference>
<dbReference type="HOGENOM" id="CLU_144911_0_1_1"/>
<dbReference type="Proteomes" id="UP000007014">
    <property type="component" value="Chloroplast"/>
</dbReference>
<dbReference type="GO" id="GO:0009507">
    <property type="term" value="C:chloroplast"/>
    <property type="evidence" value="ECO:0007669"/>
    <property type="project" value="UniProtKB-SubCell"/>
</dbReference>
<dbReference type="GO" id="GO:0005763">
    <property type="term" value="C:mitochondrial small ribosomal subunit"/>
    <property type="evidence" value="ECO:0007669"/>
    <property type="project" value="TreeGrafter"/>
</dbReference>
<dbReference type="GO" id="GO:0019843">
    <property type="term" value="F:rRNA binding"/>
    <property type="evidence" value="ECO:0007669"/>
    <property type="project" value="UniProtKB-UniRule"/>
</dbReference>
<dbReference type="GO" id="GO:0003735">
    <property type="term" value="F:structural constituent of ribosome"/>
    <property type="evidence" value="ECO:0007669"/>
    <property type="project" value="InterPro"/>
</dbReference>
<dbReference type="GO" id="GO:0000028">
    <property type="term" value="P:ribosomal small subunit assembly"/>
    <property type="evidence" value="ECO:0007669"/>
    <property type="project" value="TreeGrafter"/>
</dbReference>
<dbReference type="GO" id="GO:0006412">
    <property type="term" value="P:translation"/>
    <property type="evidence" value="ECO:0007669"/>
    <property type="project" value="UniProtKB-UniRule"/>
</dbReference>
<dbReference type="FunFam" id="3.30.860.10:FF:000001">
    <property type="entry name" value="30S ribosomal protein S19"/>
    <property type="match status" value="1"/>
</dbReference>
<dbReference type="Gene3D" id="3.30.860.10">
    <property type="entry name" value="30s Ribosomal Protein S19, Chain A"/>
    <property type="match status" value="1"/>
</dbReference>
<dbReference type="HAMAP" id="MF_00531">
    <property type="entry name" value="Ribosomal_uS19"/>
    <property type="match status" value="1"/>
</dbReference>
<dbReference type="InterPro" id="IPR002222">
    <property type="entry name" value="Ribosomal_uS19"/>
</dbReference>
<dbReference type="InterPro" id="IPR005732">
    <property type="entry name" value="Ribosomal_uS19_bac-type"/>
</dbReference>
<dbReference type="InterPro" id="IPR020934">
    <property type="entry name" value="Ribosomal_uS19_CS"/>
</dbReference>
<dbReference type="InterPro" id="IPR023575">
    <property type="entry name" value="Ribosomal_uS19_SF"/>
</dbReference>
<dbReference type="NCBIfam" id="TIGR01050">
    <property type="entry name" value="rpsS_bact"/>
    <property type="match status" value="1"/>
</dbReference>
<dbReference type="PANTHER" id="PTHR11880">
    <property type="entry name" value="RIBOSOMAL PROTEIN S19P FAMILY MEMBER"/>
    <property type="match status" value="1"/>
</dbReference>
<dbReference type="PANTHER" id="PTHR11880:SF8">
    <property type="entry name" value="SMALL RIBOSOMAL SUBUNIT PROTEIN US19M"/>
    <property type="match status" value="1"/>
</dbReference>
<dbReference type="Pfam" id="PF00203">
    <property type="entry name" value="Ribosomal_S19"/>
    <property type="match status" value="1"/>
</dbReference>
<dbReference type="PIRSF" id="PIRSF002144">
    <property type="entry name" value="Ribosomal_S19"/>
    <property type="match status" value="1"/>
</dbReference>
<dbReference type="PRINTS" id="PR00975">
    <property type="entry name" value="RIBOSOMALS19"/>
</dbReference>
<dbReference type="SUPFAM" id="SSF54570">
    <property type="entry name" value="Ribosomal protein S19"/>
    <property type="match status" value="1"/>
</dbReference>
<dbReference type="PROSITE" id="PS00323">
    <property type="entry name" value="RIBOSOMAL_S19"/>
    <property type="match status" value="1"/>
</dbReference>
<sequence length="94" mass="10647">MSRSVKKGAYVHVRLLKKIERLNQKGEKQIIKTWARSSTIVPAMVGHTLAVYNGKTHIPVFITDALVGHKLGEFAPTRNFRSHVKGDRKIRKSI</sequence>
<geneLocation type="chloroplast"/>
<keyword id="KW-0150">Chloroplast</keyword>
<keyword id="KW-0934">Plastid</keyword>
<keyword id="KW-1185">Reference proteome</keyword>
<keyword id="KW-0687">Ribonucleoprotein</keyword>
<keyword id="KW-0689">Ribosomal protein</keyword>
<keyword id="KW-0694">RNA-binding</keyword>
<keyword id="KW-0699">rRNA-binding</keyword>
<name>RR19_CYAM1</name>
<evidence type="ECO:0000255" key="1">
    <source>
        <dbReference type="HAMAP-Rule" id="MF_00531"/>
    </source>
</evidence>
<evidence type="ECO:0000305" key="2"/>
<comment type="function">
    <text evidence="1">Protein S19 forms a complex with S13 that binds strongly to the 16S ribosomal RNA.</text>
</comment>
<comment type="subcellular location">
    <subcellularLocation>
        <location>Plastid</location>
        <location>Chloroplast</location>
    </subcellularLocation>
</comment>
<comment type="similarity">
    <text evidence="1">Belongs to the universal ribosomal protein uS19 family.</text>
</comment>
<protein>
    <recommendedName>
        <fullName evidence="1">Small ribosomal subunit protein uS19c</fullName>
    </recommendedName>
    <alternativeName>
        <fullName evidence="2">30S ribosomal protein S19, chloroplastic</fullName>
    </alternativeName>
</protein>